<evidence type="ECO:0000250" key="1"/>
<evidence type="ECO:0000250" key="2">
    <source>
        <dbReference type="UniProtKB" id="P51636"/>
    </source>
</evidence>
<evidence type="ECO:0000250" key="3">
    <source>
        <dbReference type="UniProtKB" id="Q9WVC3"/>
    </source>
</evidence>
<evidence type="ECO:0000255" key="4"/>
<evidence type="ECO:0000305" key="5"/>
<keyword id="KW-1003">Cell membrane</keyword>
<keyword id="KW-0963">Cytoplasm</keyword>
<keyword id="KW-0333">Golgi apparatus</keyword>
<keyword id="KW-0472">Membrane</keyword>
<keyword id="KW-0539">Nucleus</keyword>
<keyword id="KW-0597">Phosphoprotein</keyword>
<keyword id="KW-1185">Reference proteome</keyword>
<dbReference type="EMBL" id="DP000234">
    <property type="protein sequence ID" value="AAR16229.1"/>
    <property type="molecule type" value="Genomic_DNA"/>
</dbReference>
<dbReference type="RefSeq" id="NP_001162165.1">
    <property type="nucleotide sequence ID" value="NM_001168694.1"/>
</dbReference>
<dbReference type="SMR" id="A0M8S6"/>
<dbReference type="FunCoup" id="A0M8S6">
    <property type="interactions" value="53"/>
</dbReference>
<dbReference type="STRING" id="9685.ENSFCAP00000019153"/>
<dbReference type="PaxDb" id="9685-ENSFCAP00000019153"/>
<dbReference type="GeneID" id="493667"/>
<dbReference type="KEGG" id="fca:493667"/>
<dbReference type="CTD" id="858"/>
<dbReference type="eggNOG" id="ENOG502RZYX">
    <property type="taxonomic scope" value="Eukaryota"/>
</dbReference>
<dbReference type="InParanoid" id="A0M8S6"/>
<dbReference type="OrthoDB" id="5917823at2759"/>
<dbReference type="Proteomes" id="UP000011712">
    <property type="component" value="Unplaced"/>
</dbReference>
<dbReference type="GO" id="GO:0005901">
    <property type="term" value="C:caveola"/>
    <property type="evidence" value="ECO:0000250"/>
    <property type="project" value="UniProtKB"/>
</dbReference>
<dbReference type="GO" id="GO:0031410">
    <property type="term" value="C:cytoplasmic vesicle"/>
    <property type="evidence" value="ECO:0000318"/>
    <property type="project" value="GO_Central"/>
</dbReference>
<dbReference type="GO" id="GO:0005794">
    <property type="term" value="C:Golgi apparatus"/>
    <property type="evidence" value="ECO:0000318"/>
    <property type="project" value="GO_Central"/>
</dbReference>
<dbReference type="GO" id="GO:0000139">
    <property type="term" value="C:Golgi membrane"/>
    <property type="evidence" value="ECO:0007669"/>
    <property type="project" value="UniProtKB-SubCell"/>
</dbReference>
<dbReference type="GO" id="GO:0005634">
    <property type="term" value="C:nucleus"/>
    <property type="evidence" value="ECO:0007669"/>
    <property type="project" value="UniProtKB-SubCell"/>
</dbReference>
<dbReference type="GO" id="GO:0048471">
    <property type="term" value="C:perinuclear region of cytoplasm"/>
    <property type="evidence" value="ECO:0000250"/>
    <property type="project" value="UniProtKB"/>
</dbReference>
<dbReference type="GO" id="GO:0044853">
    <property type="term" value="C:plasma membrane raft"/>
    <property type="evidence" value="ECO:0000250"/>
    <property type="project" value="UniProtKB"/>
</dbReference>
<dbReference type="GO" id="GO:0031748">
    <property type="term" value="F:D1 dopamine receptor binding"/>
    <property type="evidence" value="ECO:0000250"/>
    <property type="project" value="UniProtKB"/>
</dbReference>
<dbReference type="GO" id="GO:0060090">
    <property type="term" value="F:molecular adaptor activity"/>
    <property type="evidence" value="ECO:0000318"/>
    <property type="project" value="GO_Central"/>
</dbReference>
<dbReference type="GO" id="GO:0019901">
    <property type="term" value="F:protein kinase binding"/>
    <property type="evidence" value="ECO:0000318"/>
    <property type="project" value="GO_Central"/>
</dbReference>
<dbReference type="GO" id="GO:0070836">
    <property type="term" value="P:caveola assembly"/>
    <property type="evidence" value="ECO:0000250"/>
    <property type="project" value="UniProtKB"/>
</dbReference>
<dbReference type="GO" id="GO:0030154">
    <property type="term" value="P:cell differentiation"/>
    <property type="evidence" value="ECO:0000318"/>
    <property type="project" value="GO_Central"/>
</dbReference>
<dbReference type="GO" id="GO:0007029">
    <property type="term" value="P:endoplasmic reticulum organization"/>
    <property type="evidence" value="ECO:0000250"/>
    <property type="project" value="UniProtKB"/>
</dbReference>
<dbReference type="GO" id="GO:0008286">
    <property type="term" value="P:insulin receptor signaling pathway"/>
    <property type="evidence" value="ECO:0000318"/>
    <property type="project" value="GO_Central"/>
</dbReference>
<dbReference type="GO" id="GO:0007005">
    <property type="term" value="P:mitochondrion organization"/>
    <property type="evidence" value="ECO:0000250"/>
    <property type="project" value="UniProtKB"/>
</dbReference>
<dbReference type="GO" id="GO:0001937">
    <property type="term" value="P:negative regulation of endothelial cell proliferation"/>
    <property type="evidence" value="ECO:0000250"/>
    <property type="project" value="UniProtKB"/>
</dbReference>
<dbReference type="GO" id="GO:0060161">
    <property type="term" value="P:positive regulation of dopamine receptor signaling pathway"/>
    <property type="evidence" value="ECO:0000250"/>
    <property type="project" value="UniProtKB"/>
</dbReference>
<dbReference type="GO" id="GO:0051480">
    <property type="term" value="P:regulation of cytosolic calcium ion concentration"/>
    <property type="evidence" value="ECO:0000318"/>
    <property type="project" value="GO_Central"/>
</dbReference>
<dbReference type="GO" id="GO:0048741">
    <property type="term" value="P:skeletal muscle fiber development"/>
    <property type="evidence" value="ECO:0000250"/>
    <property type="project" value="UniProtKB"/>
</dbReference>
<dbReference type="GO" id="GO:0048278">
    <property type="term" value="P:vesicle docking"/>
    <property type="evidence" value="ECO:0000250"/>
    <property type="project" value="UniProtKB"/>
</dbReference>
<dbReference type="GO" id="GO:0006906">
    <property type="term" value="P:vesicle fusion"/>
    <property type="evidence" value="ECO:0000250"/>
    <property type="project" value="UniProtKB"/>
</dbReference>
<dbReference type="InterPro" id="IPR001612">
    <property type="entry name" value="Caveolin"/>
</dbReference>
<dbReference type="InterPro" id="IPR018361">
    <property type="entry name" value="Caveolin_CS"/>
</dbReference>
<dbReference type="PANTHER" id="PTHR10844">
    <property type="entry name" value="CAVEOLIN"/>
    <property type="match status" value="1"/>
</dbReference>
<dbReference type="PANTHER" id="PTHR10844:SF3">
    <property type="entry name" value="CAVEOLIN-2"/>
    <property type="match status" value="1"/>
</dbReference>
<dbReference type="Pfam" id="PF01146">
    <property type="entry name" value="Caveolin"/>
    <property type="match status" value="1"/>
</dbReference>
<dbReference type="PROSITE" id="PS01210">
    <property type="entry name" value="CAVEOLIN"/>
    <property type="match status" value="1"/>
</dbReference>
<accession>A0M8S6</accession>
<sequence>MGLETEKADVQLFMDDDSYSRHSGVDYADPDKFADSGSDRDPHRLNSNLKVGFEDVIAEPVSTHSFDKVWICSHALFEISKYVIYKFLTLFLAIPLAFAAGILFATLSCLHIWIIMPFVKTCLMVLPSVQTIWKSITDVVIAPLCTSVGRSFSSVSLQLSHD</sequence>
<reference key="1">
    <citation type="journal article" date="2003" name="Nature">
        <title>Comparative analyses of multi-species sequences from targeted genomic regions.</title>
        <authorList>
            <person name="Thomas J.W."/>
            <person name="Touchman J.W."/>
            <person name="Blakesley R.W."/>
            <person name="Bouffard G.G."/>
            <person name="Beckstrom-Sternberg S.M."/>
            <person name="Margulies E.H."/>
            <person name="Blanchette M."/>
            <person name="Siepel A.C."/>
            <person name="Thomas P.J."/>
            <person name="McDowell J.C."/>
            <person name="Maskeri B."/>
            <person name="Hansen N.F."/>
            <person name="Schwartz M.S."/>
            <person name="Weber R.J."/>
            <person name="Kent W.J."/>
            <person name="Karolchik D."/>
            <person name="Bruen T.C."/>
            <person name="Bevan R."/>
            <person name="Cutler D.J."/>
            <person name="Schwartz S."/>
            <person name="Elnitski L."/>
            <person name="Idol J.R."/>
            <person name="Prasad A.B."/>
            <person name="Lee-Lin S.-Q."/>
            <person name="Maduro V.V.B."/>
            <person name="Summers T.J."/>
            <person name="Portnoy M.E."/>
            <person name="Dietrich N.L."/>
            <person name="Akhter N."/>
            <person name="Ayele K."/>
            <person name="Benjamin B."/>
            <person name="Cariaga K."/>
            <person name="Brinkley C.P."/>
            <person name="Brooks S.Y."/>
            <person name="Granite S."/>
            <person name="Guan X."/>
            <person name="Gupta J."/>
            <person name="Haghighi P."/>
            <person name="Ho S.-L."/>
            <person name="Huang M.C."/>
            <person name="Karlins E."/>
            <person name="Laric P.L."/>
            <person name="Legaspi R."/>
            <person name="Lim M.J."/>
            <person name="Maduro Q.L."/>
            <person name="Masiello C.A."/>
            <person name="Mastrian S.D."/>
            <person name="McCloskey J.C."/>
            <person name="Pearson R."/>
            <person name="Stantripop S."/>
            <person name="Tiongson E.E."/>
            <person name="Tran J.T."/>
            <person name="Tsurgeon C."/>
            <person name="Vogt J.L."/>
            <person name="Walker M.A."/>
            <person name="Wetherby K.D."/>
            <person name="Wiggins L.S."/>
            <person name="Young A.C."/>
            <person name="Zhang L.-H."/>
            <person name="Osoegawa K."/>
            <person name="Zhu B."/>
            <person name="Zhao B."/>
            <person name="Shu C.L."/>
            <person name="De Jong P.J."/>
            <person name="Lawrence C.E."/>
            <person name="Smit A.F."/>
            <person name="Chakravarti A."/>
            <person name="Haussler D."/>
            <person name="Green P."/>
            <person name="Miller W."/>
            <person name="Green E.D."/>
        </authorList>
    </citation>
    <scope>NUCLEOTIDE SEQUENCE [LARGE SCALE GENOMIC DNA]</scope>
</reference>
<organism>
    <name type="scientific">Felis catus</name>
    <name type="common">Cat</name>
    <name type="synonym">Felis silvestris catus</name>
    <dbReference type="NCBI Taxonomy" id="9685"/>
    <lineage>
        <taxon>Eukaryota</taxon>
        <taxon>Metazoa</taxon>
        <taxon>Chordata</taxon>
        <taxon>Craniata</taxon>
        <taxon>Vertebrata</taxon>
        <taxon>Euteleostomi</taxon>
        <taxon>Mammalia</taxon>
        <taxon>Eutheria</taxon>
        <taxon>Laurasiatheria</taxon>
        <taxon>Carnivora</taxon>
        <taxon>Feliformia</taxon>
        <taxon>Felidae</taxon>
        <taxon>Felinae</taxon>
        <taxon>Felis</taxon>
    </lineage>
</organism>
<comment type="function">
    <text evidence="1">May act as a scaffolding protein within caveolar membranes. Interacts directly with G-protein alpha subunits and can functionally regulate their activity. Acts as an accessory protein in conjunction with CAV1 in targeting to lipid rafts and driving caveolae formation. The Ser-36 phosphorylated form has a role in modulating mitosis in endothelial cells. Positive regulator of cellular mitogenesis of the MAPK signaling pathway. Required for the insulin-stimulated nuclear translocation and activation of MAPK1 and STAT3, and the subsequent regulation of cell cycle progression (By similarity).</text>
</comment>
<comment type="subunit">
    <text evidence="1">Monomer or homodimer (By similarity). Interacts with CAV1; the interaction forms a stable heterooligomeric complex that is required for targeting to lipid rafts and for caveolae formation. Tyrosine phosphorylated forms do not form heterooligomers with the Tyr-19-phosphorylated form existing as a monomer or dimer, and the Tyr-27-form as a monomer only. Interacts (tyrosine phosphorylated form) with the SH2 domain-containing proteins, RASA1, NCK1 and SRC. Interacts (tyrosine phosphorylated form) with INSR, the interaction (Tyr-27-phosphorylated form) is increased on insulin stimulation. Interacts (Tyr-19 phosphorylated form) with MAPK1 (phosphorylated form); the interaction, promoted by insulin, leads to nuclear location and MAPK1 activation. Interacts with STAT3; the interaction is increased on insulin-induced tyrosine phosphorylation leading to STAT activation (By similarity).</text>
</comment>
<comment type="subcellular location">
    <subcellularLocation>
        <location evidence="1">Nucleus</location>
    </subcellularLocation>
    <subcellularLocation>
        <location evidence="1">Cytoplasm</location>
    </subcellularLocation>
    <subcellularLocation>
        <location>Golgi apparatus membrane</location>
        <topology>Peripheral membrane protein</topology>
    </subcellularLocation>
    <subcellularLocation>
        <location>Cell membrane</location>
        <topology>Peripheral membrane protein</topology>
    </subcellularLocation>
    <subcellularLocation>
        <location>Membrane</location>
        <location>Caveola</location>
        <topology>Peripheral membrane protein</topology>
    </subcellularLocation>
    <text evidence="1">Potential hairpin-like structure in the membrane. Membrane protein of caveolae. Tyr-19-phosphorylated form is enriched at sites of cell-cell contact and is translocated to the nucleus in complex with MAPK1 in response to insulin (By similarity). Tyr-27-phosphorylated form is located both in the cytoplasm and plasma membrane. CAV1-mediated Ser-23-phosphorylated form locates to the plasma membrane. Ser-36-phosphorylated form resides in intracellular compartments.</text>
</comment>
<comment type="PTM">
    <text evidence="1">Phosphorylated on serine and tyrosine residues. CAV1 promotes phosphorylation on Ser-23 which then targets the complex to the plasma membrane, lipid rafts and caveolae. Phosphorylation on Ser-36 appears to modulate mitosis in endothelial cells (By similarity). Phosphorylation on both Tyr-19 and Tyr-27 is required for insulin-induced 'Ser-727' phosphorylation of STAT3 and its activation. Phosphorylation on Tyr-19 is required for insulin-induced phosphorylation of MAPK1 and DNA binding of STAT3. Tyrosine phosphorylation is induced by both EGF and insulin (By. similarity).</text>
</comment>
<comment type="similarity">
    <text evidence="5">Belongs to the caveolin family.</text>
</comment>
<gene>
    <name type="primary">CAV2</name>
</gene>
<name>CAV2_FELCA</name>
<feature type="chain" id="PRO_0000279733" description="Caveolin-2">
    <location>
        <begin position="1"/>
        <end position="162"/>
    </location>
</feature>
<feature type="topological domain" description="Cytoplasmic" evidence="4">
    <location>
        <begin position="1"/>
        <end position="86"/>
    </location>
</feature>
<feature type="intramembrane region" description="Helical" evidence="4">
    <location>
        <begin position="87"/>
        <end position="107"/>
    </location>
</feature>
<feature type="topological domain" description="Cytoplasmic" evidence="4">
    <location>
        <begin position="108"/>
        <end position="162"/>
    </location>
</feature>
<feature type="modified residue" description="Phosphotyrosine; by SRC" evidence="2">
    <location>
        <position position="19"/>
    </location>
</feature>
<feature type="modified residue" description="Phosphoserine" evidence="3">
    <location>
        <position position="20"/>
    </location>
</feature>
<feature type="modified residue" description="Phosphoserine" evidence="2">
    <location>
        <position position="23"/>
    </location>
</feature>
<feature type="modified residue" description="Phosphotyrosine; by SRC" evidence="2">
    <location>
        <position position="27"/>
    </location>
</feature>
<feature type="modified residue" description="Phosphoserine" evidence="2">
    <location>
        <position position="36"/>
    </location>
</feature>
<protein>
    <recommendedName>
        <fullName>Caveolin-2</fullName>
    </recommendedName>
</protein>
<proteinExistence type="inferred from homology"/>